<keyword id="KW-0472">Membrane</keyword>
<keyword id="KW-0479">Metal-binding</keyword>
<keyword id="KW-0576">Peroxisome</keyword>
<keyword id="KW-0653">Protein transport</keyword>
<keyword id="KW-1185">Reference proteome</keyword>
<keyword id="KW-0808">Transferase</keyword>
<keyword id="KW-0812">Transmembrane</keyword>
<keyword id="KW-1133">Transmembrane helix</keyword>
<keyword id="KW-0813">Transport</keyword>
<keyword id="KW-0833">Ubl conjugation pathway</keyword>
<keyword id="KW-0862">Zinc</keyword>
<keyword id="KW-0863">Zinc-finger</keyword>
<organism>
    <name type="scientific">Xenopus laevis</name>
    <name type="common">African clawed frog</name>
    <dbReference type="NCBI Taxonomy" id="8355"/>
    <lineage>
        <taxon>Eukaryota</taxon>
        <taxon>Metazoa</taxon>
        <taxon>Chordata</taxon>
        <taxon>Craniata</taxon>
        <taxon>Vertebrata</taxon>
        <taxon>Euteleostomi</taxon>
        <taxon>Amphibia</taxon>
        <taxon>Batrachia</taxon>
        <taxon>Anura</taxon>
        <taxon>Pipoidea</taxon>
        <taxon>Pipidae</taxon>
        <taxon>Xenopodinae</taxon>
        <taxon>Xenopus</taxon>
        <taxon>Xenopus</taxon>
    </lineage>
</organism>
<accession>A0A1L8FZ98</accession>
<comment type="function">
    <text evidence="3 6">E3 ubiquitin-protein ligase component of a retrotranslocation channel required for peroxisome organization by mediating export of the PEX5 receptor from peroxisomes to the cytosol, thereby promoting PEX5 recycling (PubMed:35931083). The retrotranslocation channel is composed of PEX2, PEX10 and PEX12; each subunit contributing transmembrane segments that coassemble into an open channel that specifically allows the passage of PEX5 through the peroxisomal membrane. PEX2 also regulates peroxisome organization by acting as a E3 ubiquitin-protein ligase (By similarity).</text>
</comment>
<comment type="catalytic activity">
    <reaction evidence="3">
        <text>[E2 ubiquitin-conjugating enzyme]-S-ubiquitinyl-L-cysteine + [acceptor protein]-L-cysteine = [E2 ubiquitin-conjugating enzyme]-L-cysteine + [acceptor protein]-S-ubiquitinyl-L-cysteine.</text>
        <dbReference type="EC" id="2.3.2.36"/>
    </reaction>
</comment>
<comment type="catalytic activity">
    <reaction evidence="2">
        <text>S-ubiquitinyl-[E2 ubiquitin-conjugating enzyme]-L-cysteine + [acceptor protein]-L-lysine = [E2 ubiquitin-conjugating enzyme]-L-cysteine + N(6)-ubiquitinyl-[acceptor protein]-L-lysine.</text>
        <dbReference type="EC" id="2.3.2.27"/>
    </reaction>
</comment>
<comment type="pathway">
    <text evidence="2">Protein modification; protein ubiquitination.</text>
</comment>
<comment type="subunit">
    <text evidence="2">Component of the PEX2-PEX10-PEX12 retrotranslocation channel.</text>
</comment>
<comment type="subcellular location">
    <subcellularLocation>
        <location evidence="2">Peroxisome membrane</location>
        <topology evidence="4">Multi-pass membrane protein</topology>
    </subcellularLocation>
</comment>
<comment type="domain">
    <text evidence="1">The three subunits of the retrotranslocation channel (PEX2, PEX10 and PEX12) coassemble in the membrane into a channel with an open 10 Angstrom pore. The RING-type zinc-fingers that catalyze PEX5 receptor ubiquitination are positioned above the pore on the cytosolic side of the complex.</text>
</comment>
<comment type="similarity">
    <text evidence="7">Belongs to the pex2/pex10/pex12 family.</text>
</comment>
<sequence>MAASENNMEEINPVLRISQLDAIELNKALEQLIWSQFSSCFQGFKPGLLTRFEPEIKASLCLFLWRYTIYTKNATVGQTILNMQYKNDLAVTKKYRPLNKQQKVWFALFLVGGKWLEERSFDLFSNHPFGASFQRTKYFLNAISGLLKFGALLNFLIFLQQGKFATLTERLLGIRSVFSRPQDVRQVGFEYMNREILWHGFAEFLIFLLPLINTQKLKSKLFSWCKPAKSHGVSDPSLAVICKECCLCGEWPAMPHTIGCSHVFCYYCIKSNYMSDMYFTCPKCSSQVHNLQPLEFKIEISEVHTL</sequence>
<feature type="chain" id="PRO_0000456984" description="Peroxisome biogenesis factor 2">
    <location>
        <begin position="1"/>
        <end position="306"/>
    </location>
</feature>
<feature type="topological domain" description="Peroxisomal matrix" evidence="1">
    <location>
        <begin position="1"/>
        <end position="15"/>
    </location>
</feature>
<feature type="transmembrane region" description="Helical; Name=TM1" evidence="1">
    <location>
        <begin position="16"/>
        <end position="42"/>
    </location>
</feature>
<feature type="topological domain" description="Cytoplasmic" evidence="1">
    <location>
        <begin position="43"/>
        <end position="48"/>
    </location>
</feature>
<feature type="transmembrane region" description="Helical; Name=TM2" evidence="1">
    <location>
        <begin position="49"/>
        <end position="74"/>
    </location>
</feature>
<feature type="topological domain" description="Peroxisomal matrix" evidence="1">
    <location>
        <begin position="75"/>
        <end position="98"/>
    </location>
</feature>
<feature type="transmembrane region" description="Helical; Name=TM3" evidence="1">
    <location>
        <begin position="99"/>
        <end position="125"/>
    </location>
</feature>
<feature type="topological domain" description="Cytoplasmic" evidence="1">
    <location>
        <begin position="126"/>
        <end position="134"/>
    </location>
</feature>
<feature type="transmembrane region" description="Helical; Name=TM4" evidence="1">
    <location>
        <begin position="135"/>
        <end position="161"/>
    </location>
</feature>
<feature type="topological domain" description="Peroxisomal matrix" evidence="1">
    <location>
        <begin position="162"/>
        <end position="188"/>
    </location>
</feature>
<feature type="transmembrane region" description="Helical; Name=TM5" evidence="1">
    <location>
        <begin position="189"/>
        <end position="212"/>
    </location>
</feature>
<feature type="topological domain" description="Cytoplasmic" evidence="1">
    <location>
        <begin position="213"/>
        <end position="306"/>
    </location>
</feature>
<feature type="zinc finger region" description="RING-type" evidence="5">
    <location>
        <begin position="245"/>
        <end position="285"/>
    </location>
</feature>
<feature type="binding site" evidence="1">
    <location>
        <position position="245"/>
    </location>
    <ligand>
        <name>Zn(2+)</name>
        <dbReference type="ChEBI" id="CHEBI:29105"/>
        <label>1</label>
    </ligand>
</feature>
<feature type="binding site" evidence="1">
    <location>
        <position position="248"/>
    </location>
    <ligand>
        <name>Zn(2+)</name>
        <dbReference type="ChEBI" id="CHEBI:29105"/>
        <label>1</label>
    </ligand>
</feature>
<feature type="binding site" evidence="1">
    <location>
        <position position="260"/>
    </location>
    <ligand>
        <name>Zn(2+)</name>
        <dbReference type="ChEBI" id="CHEBI:29105"/>
        <label>2</label>
    </ligand>
</feature>
<feature type="binding site" evidence="1">
    <location>
        <position position="262"/>
    </location>
    <ligand>
        <name>Zn(2+)</name>
        <dbReference type="ChEBI" id="CHEBI:29105"/>
        <label>2</label>
    </ligand>
</feature>
<feature type="binding site" evidence="1">
    <location>
        <position position="265"/>
    </location>
    <ligand>
        <name>Zn(2+)</name>
        <dbReference type="ChEBI" id="CHEBI:29105"/>
        <label>1</label>
    </ligand>
</feature>
<feature type="binding site" evidence="1">
    <location>
        <position position="268"/>
    </location>
    <ligand>
        <name>Zn(2+)</name>
        <dbReference type="ChEBI" id="CHEBI:29105"/>
        <label>1</label>
    </ligand>
</feature>
<feature type="binding site" evidence="1">
    <location>
        <position position="281"/>
    </location>
    <ligand>
        <name>Zn(2+)</name>
        <dbReference type="ChEBI" id="CHEBI:29105"/>
        <label>2</label>
    </ligand>
</feature>
<feature type="binding site" evidence="1">
    <location>
        <position position="284"/>
    </location>
    <ligand>
        <name>Zn(2+)</name>
        <dbReference type="ChEBI" id="CHEBI:29105"/>
        <label>2</label>
    </ligand>
</feature>
<evidence type="ECO:0000250" key="1">
    <source>
        <dbReference type="UniProtKB" id="G2Q1C9"/>
    </source>
</evidence>
<evidence type="ECO:0000250" key="2">
    <source>
        <dbReference type="UniProtKB" id="P28328"/>
    </source>
</evidence>
<evidence type="ECO:0000250" key="3">
    <source>
        <dbReference type="UniProtKB" id="P32800"/>
    </source>
</evidence>
<evidence type="ECO:0000255" key="4"/>
<evidence type="ECO:0000255" key="5">
    <source>
        <dbReference type="PROSITE-ProRule" id="PRU00175"/>
    </source>
</evidence>
<evidence type="ECO:0000269" key="6">
    <source>
    </source>
</evidence>
<evidence type="ECO:0000305" key="7"/>
<evidence type="ECO:0000312" key="8">
    <source>
        <dbReference type="Xenbase" id="XB-GENE-6487852"/>
    </source>
</evidence>
<gene>
    <name evidence="8" type="primary">pex2.L</name>
</gene>
<proteinExistence type="inferred from homology"/>
<protein>
    <recommendedName>
        <fullName evidence="7">Peroxisome biogenesis factor 2</fullName>
        <ecNumber evidence="3">2.3.2.27</ecNumber>
        <ecNumber evidence="3">2.3.2.36</ecNumber>
    </recommendedName>
    <alternativeName>
        <fullName evidence="7">Peroxin-2</fullName>
    </alternativeName>
</protein>
<reference key="1">
    <citation type="journal article" date="2016" name="Nature">
        <title>Genome evolution in the allotetraploid frog Xenopus laevis.</title>
        <authorList>
            <person name="Session A.M."/>
            <person name="Uno Y."/>
            <person name="Kwon T."/>
            <person name="Chapman J.A."/>
            <person name="Toyoda A."/>
            <person name="Takahashi S."/>
            <person name="Fukui A."/>
            <person name="Hikosaka A."/>
            <person name="Suzuki A."/>
            <person name="Kondo M."/>
            <person name="van Heeringen S.J."/>
            <person name="Quigley I."/>
            <person name="Heinz S."/>
            <person name="Ogino H."/>
            <person name="Ochi H."/>
            <person name="Hellsten U."/>
            <person name="Lyons J.B."/>
            <person name="Simakov O."/>
            <person name="Putnam N."/>
            <person name="Stites J."/>
            <person name="Kuroki Y."/>
            <person name="Tanaka T."/>
            <person name="Michiue T."/>
            <person name="Watanabe M."/>
            <person name="Bogdanovic O."/>
            <person name="Lister R."/>
            <person name="Georgiou G."/>
            <person name="Paranjpe S.S."/>
            <person name="van Kruijsbergen I."/>
            <person name="Shu S."/>
            <person name="Carlson J."/>
            <person name="Kinoshita T."/>
            <person name="Ohta Y."/>
            <person name="Mawaribuchi S."/>
            <person name="Jenkins J."/>
            <person name="Grimwood J."/>
            <person name="Schmutz J."/>
            <person name="Mitros T."/>
            <person name="Mozaffari S.V."/>
            <person name="Suzuki Y."/>
            <person name="Haramoto Y."/>
            <person name="Yamamoto T.S."/>
            <person name="Takagi C."/>
            <person name="Heald R."/>
            <person name="Miller K."/>
            <person name="Haudenschild C."/>
            <person name="Kitzman J."/>
            <person name="Nakayama T."/>
            <person name="Izutsu Y."/>
            <person name="Robert J."/>
            <person name="Fortriede J."/>
            <person name="Burns K."/>
            <person name="Lotay V."/>
            <person name="Karimi K."/>
            <person name="Yasuoka Y."/>
            <person name="Dichmann D.S."/>
            <person name="Flajnik M.F."/>
            <person name="Houston D.W."/>
            <person name="Shendure J."/>
            <person name="DuPasquier L."/>
            <person name="Vize P.D."/>
            <person name="Zorn A.M."/>
            <person name="Ito M."/>
            <person name="Marcotte E.M."/>
            <person name="Wallingford J.B."/>
            <person name="Ito Y."/>
            <person name="Asashima M."/>
            <person name="Ueno N."/>
            <person name="Matsuda Y."/>
            <person name="Veenstra G.J."/>
            <person name="Fujiyama A."/>
            <person name="Harland R.M."/>
            <person name="Taira M."/>
            <person name="Rokhsar D.S."/>
        </authorList>
    </citation>
    <scope>NUCLEOTIDE SEQUENCE [LARGE SCALE GENOMIC DNA]</scope>
    <source>
        <strain>J</strain>
    </source>
</reference>
<reference key="2">
    <citation type="journal article" date="2022" name="Mol. Cell">
        <title>PEX5 translocation into and out of peroxisomes drives matrix protein import.</title>
        <authorList>
            <person name="Skowyra M.L."/>
            <person name="Rapoport T.A."/>
        </authorList>
    </citation>
    <scope>FUNCTION</scope>
</reference>
<dbReference type="EC" id="2.3.2.27" evidence="3"/>
<dbReference type="EC" id="2.3.2.36" evidence="3"/>
<dbReference type="RefSeq" id="XP_018123574.1">
    <property type="nucleotide sequence ID" value="XM_018268085.2"/>
</dbReference>
<dbReference type="SMR" id="A0A1L8FZ98"/>
<dbReference type="STRING" id="8355.A0A1L8FZ98"/>
<dbReference type="PaxDb" id="8355-A0A1L8FZ98"/>
<dbReference type="GeneID" id="108719303"/>
<dbReference type="KEGG" id="xla:108719303"/>
<dbReference type="AGR" id="Xenbase:XB-GENE-6487852"/>
<dbReference type="CTD" id="108719303"/>
<dbReference type="Xenbase" id="XB-GENE-6487852">
    <property type="gene designation" value="pex2.L"/>
</dbReference>
<dbReference type="OMA" id="WHGLMEL"/>
<dbReference type="OrthoDB" id="1701437at2759"/>
<dbReference type="UniPathway" id="UPA00143"/>
<dbReference type="Proteomes" id="UP000186698">
    <property type="component" value="Chromosome 6L"/>
</dbReference>
<dbReference type="Bgee" id="108719303">
    <property type="expression patterns" value="Expressed in muscle tissue and 19 other cell types or tissues"/>
</dbReference>
<dbReference type="GO" id="GO:0005778">
    <property type="term" value="C:peroxisomal membrane"/>
    <property type="evidence" value="ECO:0007669"/>
    <property type="project" value="UniProtKB-SubCell"/>
</dbReference>
<dbReference type="GO" id="GO:0061630">
    <property type="term" value="F:ubiquitin protein ligase activity"/>
    <property type="evidence" value="ECO:0000250"/>
    <property type="project" value="UniProtKB"/>
</dbReference>
<dbReference type="GO" id="GO:0008270">
    <property type="term" value="F:zinc ion binding"/>
    <property type="evidence" value="ECO:0007669"/>
    <property type="project" value="UniProtKB-KW"/>
</dbReference>
<dbReference type="GO" id="GO:0000425">
    <property type="term" value="P:pexophagy"/>
    <property type="evidence" value="ECO:0000250"/>
    <property type="project" value="UniProtKB"/>
</dbReference>
<dbReference type="GO" id="GO:0016562">
    <property type="term" value="P:protein import into peroxisome matrix, receptor recycling"/>
    <property type="evidence" value="ECO:0000250"/>
    <property type="project" value="UniProtKB"/>
</dbReference>
<dbReference type="GO" id="GO:0016567">
    <property type="term" value="P:protein ubiquitination"/>
    <property type="evidence" value="ECO:0007669"/>
    <property type="project" value="UniProtKB-UniPathway"/>
</dbReference>
<dbReference type="GO" id="GO:1990928">
    <property type="term" value="P:response to amino acid starvation"/>
    <property type="evidence" value="ECO:0000250"/>
    <property type="project" value="UniProtKB"/>
</dbReference>
<dbReference type="CDD" id="cd16526">
    <property type="entry name" value="RING-HC_PEX2"/>
    <property type="match status" value="1"/>
</dbReference>
<dbReference type="Gene3D" id="3.30.40.10">
    <property type="entry name" value="Zinc/RING finger domain, C3HC4 (zinc finger)"/>
    <property type="match status" value="1"/>
</dbReference>
<dbReference type="InterPro" id="IPR025654">
    <property type="entry name" value="PEX2/10"/>
</dbReference>
<dbReference type="InterPro" id="IPR006845">
    <property type="entry name" value="Pex_N"/>
</dbReference>
<dbReference type="InterPro" id="IPR045859">
    <property type="entry name" value="RING-HC_PEX2"/>
</dbReference>
<dbReference type="InterPro" id="IPR001841">
    <property type="entry name" value="Znf_RING"/>
</dbReference>
<dbReference type="InterPro" id="IPR013083">
    <property type="entry name" value="Znf_RING/FYVE/PHD"/>
</dbReference>
<dbReference type="InterPro" id="IPR017907">
    <property type="entry name" value="Znf_RING_CS"/>
</dbReference>
<dbReference type="PANTHER" id="PTHR48178">
    <property type="entry name" value="PEROXISOME BIOGENESIS FACTOR 2"/>
    <property type="match status" value="1"/>
</dbReference>
<dbReference type="PANTHER" id="PTHR48178:SF1">
    <property type="entry name" value="PEROXISOME BIOGENESIS FACTOR 2"/>
    <property type="match status" value="1"/>
</dbReference>
<dbReference type="Pfam" id="PF04757">
    <property type="entry name" value="Pex2_Pex12"/>
    <property type="match status" value="1"/>
</dbReference>
<dbReference type="SMART" id="SM00184">
    <property type="entry name" value="RING"/>
    <property type="match status" value="1"/>
</dbReference>
<dbReference type="SUPFAM" id="SSF57850">
    <property type="entry name" value="RING/U-box"/>
    <property type="match status" value="1"/>
</dbReference>
<dbReference type="PROSITE" id="PS00518">
    <property type="entry name" value="ZF_RING_1"/>
    <property type="match status" value="1"/>
</dbReference>
<dbReference type="PROSITE" id="PS50089">
    <property type="entry name" value="ZF_RING_2"/>
    <property type="match status" value="1"/>
</dbReference>
<name>PEX2_XENLA</name>